<evidence type="ECO:0000305" key="1"/>
<protein>
    <recommendedName>
        <fullName>UPF0150 protein ssr1765</fullName>
    </recommendedName>
</protein>
<gene>
    <name type="ordered locus">ssr1765</name>
</gene>
<proteinExistence type="inferred from homology"/>
<name>Y1765_SYNY3</name>
<organism>
    <name type="scientific">Synechocystis sp. (strain ATCC 27184 / PCC 6803 / Kazusa)</name>
    <dbReference type="NCBI Taxonomy" id="1111708"/>
    <lineage>
        <taxon>Bacteria</taxon>
        <taxon>Bacillati</taxon>
        <taxon>Cyanobacteriota</taxon>
        <taxon>Cyanophyceae</taxon>
        <taxon>Synechococcales</taxon>
        <taxon>Merismopediaceae</taxon>
        <taxon>Synechocystis</taxon>
    </lineage>
</organism>
<comment type="similarity">
    <text evidence="1">Belongs to the UPF0150 family.</text>
</comment>
<comment type="sequence caution" evidence="1">
    <conflict type="erroneous initiation">
        <sequence resource="EMBL-CDS" id="BAA16930"/>
    </conflict>
</comment>
<accession>P72913</accession>
<sequence>MTVTPKQIYNYTVLLEKELDGGYHAFCPMLKGCHSQGDTFEEAIQNITEAIELYIESLIAEHQPVPKEDLIVKPLSILV</sequence>
<dbReference type="EMBL" id="BA000022">
    <property type="protein sequence ID" value="BAA16930.1"/>
    <property type="status" value="ALT_INIT"/>
    <property type="molecule type" value="Genomic_DNA"/>
</dbReference>
<dbReference type="PIR" id="S74779">
    <property type="entry name" value="S74779"/>
</dbReference>
<dbReference type="SMR" id="P72913"/>
<dbReference type="STRING" id="1148.gene:10497790"/>
<dbReference type="PaxDb" id="1148-1652004"/>
<dbReference type="EnsemblBacteria" id="BAA16930">
    <property type="protein sequence ID" value="BAA16930"/>
    <property type="gene ID" value="BAA16930"/>
</dbReference>
<dbReference type="KEGG" id="syn:ssr1765"/>
<dbReference type="eggNOG" id="COG1598">
    <property type="taxonomic scope" value="Bacteria"/>
</dbReference>
<dbReference type="InParanoid" id="P72913"/>
<dbReference type="PhylomeDB" id="P72913"/>
<dbReference type="Proteomes" id="UP000001425">
    <property type="component" value="Chromosome"/>
</dbReference>
<dbReference type="GO" id="GO:0006355">
    <property type="term" value="P:regulation of DNA-templated transcription"/>
    <property type="evidence" value="ECO:0000318"/>
    <property type="project" value="GO_Central"/>
</dbReference>
<dbReference type="Gene3D" id="3.30.160.250">
    <property type="match status" value="1"/>
</dbReference>
<dbReference type="InterPro" id="IPR031807">
    <property type="entry name" value="HicB-like"/>
</dbReference>
<dbReference type="InterPro" id="IPR051404">
    <property type="entry name" value="TA_system_antitoxin"/>
</dbReference>
<dbReference type="InterPro" id="IPR035069">
    <property type="entry name" value="TTHA1013/TTHA0281-like"/>
</dbReference>
<dbReference type="PANTHER" id="PTHR34504">
    <property type="entry name" value="ANTITOXIN HICB"/>
    <property type="match status" value="1"/>
</dbReference>
<dbReference type="PANTHER" id="PTHR34504:SF4">
    <property type="entry name" value="ANTITOXIN HICB"/>
    <property type="match status" value="1"/>
</dbReference>
<dbReference type="Pfam" id="PF15919">
    <property type="entry name" value="HicB_lk_antitox"/>
    <property type="match status" value="1"/>
</dbReference>
<dbReference type="SUPFAM" id="SSF143100">
    <property type="entry name" value="TTHA1013/TTHA0281-like"/>
    <property type="match status" value="1"/>
</dbReference>
<reference key="1">
    <citation type="journal article" date="1996" name="DNA Res.">
        <title>Sequence analysis of the genome of the unicellular cyanobacterium Synechocystis sp. strain PCC6803. II. Sequence determination of the entire genome and assignment of potential protein-coding regions.</title>
        <authorList>
            <person name="Kaneko T."/>
            <person name="Sato S."/>
            <person name="Kotani H."/>
            <person name="Tanaka A."/>
            <person name="Asamizu E."/>
            <person name="Nakamura Y."/>
            <person name="Miyajima N."/>
            <person name="Hirosawa M."/>
            <person name="Sugiura M."/>
            <person name="Sasamoto S."/>
            <person name="Kimura T."/>
            <person name="Hosouchi T."/>
            <person name="Matsuno A."/>
            <person name="Muraki A."/>
            <person name="Nakazaki N."/>
            <person name="Naruo K."/>
            <person name="Okumura S."/>
            <person name="Shimpo S."/>
            <person name="Takeuchi C."/>
            <person name="Wada T."/>
            <person name="Watanabe A."/>
            <person name="Yamada M."/>
            <person name="Yasuda M."/>
            <person name="Tabata S."/>
        </authorList>
    </citation>
    <scope>NUCLEOTIDE SEQUENCE [LARGE SCALE GENOMIC DNA]</scope>
    <source>
        <strain>ATCC 27184 / PCC 6803 / Kazusa</strain>
    </source>
</reference>
<feature type="chain" id="PRO_0000157937" description="UPF0150 protein ssr1765">
    <location>
        <begin position="1"/>
        <end position="79"/>
    </location>
</feature>
<keyword id="KW-1185">Reference proteome</keyword>